<name>QUEA_BACAC</name>
<dbReference type="EC" id="2.4.99.17" evidence="1"/>
<dbReference type="EMBL" id="CP001215">
    <property type="protein sequence ID" value="ACP15396.1"/>
    <property type="molecule type" value="Genomic_DNA"/>
</dbReference>
<dbReference type="RefSeq" id="WP_000354028.1">
    <property type="nucleotide sequence ID" value="NC_012581.1"/>
</dbReference>
<dbReference type="SMR" id="C3L6U7"/>
<dbReference type="GeneID" id="93006683"/>
<dbReference type="KEGG" id="bah:BAMEG_4682"/>
<dbReference type="HOGENOM" id="CLU_039110_1_0_9"/>
<dbReference type="UniPathway" id="UPA00392"/>
<dbReference type="GO" id="GO:0005737">
    <property type="term" value="C:cytoplasm"/>
    <property type="evidence" value="ECO:0007669"/>
    <property type="project" value="UniProtKB-SubCell"/>
</dbReference>
<dbReference type="GO" id="GO:0051075">
    <property type="term" value="F:S-adenosylmethionine:tRNA ribosyltransferase-isomerase activity"/>
    <property type="evidence" value="ECO:0007669"/>
    <property type="project" value="UniProtKB-EC"/>
</dbReference>
<dbReference type="GO" id="GO:0008616">
    <property type="term" value="P:queuosine biosynthetic process"/>
    <property type="evidence" value="ECO:0007669"/>
    <property type="project" value="UniProtKB-UniRule"/>
</dbReference>
<dbReference type="GO" id="GO:0002099">
    <property type="term" value="P:tRNA wobble guanine modification"/>
    <property type="evidence" value="ECO:0007669"/>
    <property type="project" value="TreeGrafter"/>
</dbReference>
<dbReference type="FunFam" id="2.40.10.240:FF:000002">
    <property type="entry name" value="S-adenosylmethionine:tRNA ribosyltransferase-isomerase"/>
    <property type="match status" value="1"/>
</dbReference>
<dbReference type="FunFam" id="3.40.1780.10:FF:000001">
    <property type="entry name" value="S-adenosylmethionine:tRNA ribosyltransferase-isomerase"/>
    <property type="match status" value="1"/>
</dbReference>
<dbReference type="Gene3D" id="2.40.10.240">
    <property type="entry name" value="QueA-like"/>
    <property type="match status" value="1"/>
</dbReference>
<dbReference type="Gene3D" id="3.40.1780.10">
    <property type="entry name" value="QueA-like"/>
    <property type="match status" value="1"/>
</dbReference>
<dbReference type="HAMAP" id="MF_00113">
    <property type="entry name" value="QueA"/>
    <property type="match status" value="1"/>
</dbReference>
<dbReference type="InterPro" id="IPR003699">
    <property type="entry name" value="QueA"/>
</dbReference>
<dbReference type="InterPro" id="IPR042118">
    <property type="entry name" value="QueA_dom1"/>
</dbReference>
<dbReference type="InterPro" id="IPR042119">
    <property type="entry name" value="QueA_dom2"/>
</dbReference>
<dbReference type="InterPro" id="IPR036100">
    <property type="entry name" value="QueA_sf"/>
</dbReference>
<dbReference type="NCBIfam" id="NF001140">
    <property type="entry name" value="PRK00147.1"/>
    <property type="match status" value="1"/>
</dbReference>
<dbReference type="NCBIfam" id="TIGR00113">
    <property type="entry name" value="queA"/>
    <property type="match status" value="1"/>
</dbReference>
<dbReference type="PANTHER" id="PTHR30307">
    <property type="entry name" value="S-ADENOSYLMETHIONINE:TRNA RIBOSYLTRANSFERASE-ISOMERASE"/>
    <property type="match status" value="1"/>
</dbReference>
<dbReference type="PANTHER" id="PTHR30307:SF0">
    <property type="entry name" value="S-ADENOSYLMETHIONINE:TRNA RIBOSYLTRANSFERASE-ISOMERASE"/>
    <property type="match status" value="1"/>
</dbReference>
<dbReference type="Pfam" id="PF02547">
    <property type="entry name" value="Queuosine_synth"/>
    <property type="match status" value="1"/>
</dbReference>
<dbReference type="SUPFAM" id="SSF111337">
    <property type="entry name" value="QueA-like"/>
    <property type="match status" value="1"/>
</dbReference>
<accession>C3L6U7</accession>
<feature type="chain" id="PRO_1000119140" description="S-adenosylmethionine:tRNA ribosyltransferase-isomerase">
    <location>
        <begin position="1"/>
        <end position="350"/>
    </location>
</feature>
<evidence type="ECO:0000255" key="1">
    <source>
        <dbReference type="HAMAP-Rule" id="MF_00113"/>
    </source>
</evidence>
<protein>
    <recommendedName>
        <fullName evidence="1">S-adenosylmethionine:tRNA ribosyltransferase-isomerase</fullName>
        <ecNumber evidence="1">2.4.99.17</ecNumber>
    </recommendedName>
    <alternativeName>
        <fullName evidence="1">Queuosine biosynthesis protein QueA</fullName>
    </alternativeName>
</protein>
<sequence length="350" mass="39387">MDINLFDFHLPEELIAQVPLEERETSRLMVLDRETGDIEHKHFTDILSYLHEGDCLVLNETKVMPARLHGVKEDTGAHIEVLLLKQEEGDKWETLVKPAKRVKEGTVISFGEGKLKATCTGTADQGGRQLEFSYDGIFYEILDELGEMPLPPYIKETLEDRDRYQTVYAKEIGSAAAPTAGLHFTEELLEKLKQKGVELAFITLHVGLGTFRPVSADTIEEHHMHAEYYHMSEETAALLNRVKENGGRIITVGTTSTRTLETIATDHDGKLCAASGWTDIFMYPGYEFKAIDGLITNFHLPKSTLIMLVSAFANRDNVLHAYNEAVKEKYRFFSFGDAMFVASHAKMGNK</sequence>
<reference key="1">
    <citation type="submission" date="2008-10" db="EMBL/GenBank/DDBJ databases">
        <title>Genome sequence of Bacillus anthracis str. CDC 684.</title>
        <authorList>
            <person name="Dodson R.J."/>
            <person name="Munk A.C."/>
            <person name="Brettin T."/>
            <person name="Bruce D."/>
            <person name="Detter C."/>
            <person name="Tapia R."/>
            <person name="Han C."/>
            <person name="Sutton G."/>
            <person name="Sims D."/>
        </authorList>
    </citation>
    <scope>NUCLEOTIDE SEQUENCE [LARGE SCALE GENOMIC DNA]</scope>
    <source>
        <strain>CDC 684 / NRRL 3495</strain>
    </source>
</reference>
<comment type="function">
    <text evidence="1">Transfers and isomerizes the ribose moiety from AdoMet to the 7-aminomethyl group of 7-deazaguanine (preQ1-tRNA) to give epoxyqueuosine (oQ-tRNA).</text>
</comment>
<comment type="catalytic activity">
    <reaction evidence="1">
        <text>7-aminomethyl-7-carbaguanosine(34) in tRNA + S-adenosyl-L-methionine = epoxyqueuosine(34) in tRNA + adenine + L-methionine + 2 H(+)</text>
        <dbReference type="Rhea" id="RHEA:32155"/>
        <dbReference type="Rhea" id="RHEA-COMP:10342"/>
        <dbReference type="Rhea" id="RHEA-COMP:18582"/>
        <dbReference type="ChEBI" id="CHEBI:15378"/>
        <dbReference type="ChEBI" id="CHEBI:16708"/>
        <dbReference type="ChEBI" id="CHEBI:57844"/>
        <dbReference type="ChEBI" id="CHEBI:59789"/>
        <dbReference type="ChEBI" id="CHEBI:82833"/>
        <dbReference type="ChEBI" id="CHEBI:194443"/>
        <dbReference type="EC" id="2.4.99.17"/>
    </reaction>
</comment>
<comment type="pathway">
    <text evidence="1">tRNA modification; tRNA-queuosine biosynthesis.</text>
</comment>
<comment type="subunit">
    <text evidence="1">Monomer.</text>
</comment>
<comment type="subcellular location">
    <subcellularLocation>
        <location evidence="1">Cytoplasm</location>
    </subcellularLocation>
</comment>
<comment type="similarity">
    <text evidence="1">Belongs to the QueA family.</text>
</comment>
<organism>
    <name type="scientific">Bacillus anthracis (strain CDC 684 / NRRL 3495)</name>
    <dbReference type="NCBI Taxonomy" id="568206"/>
    <lineage>
        <taxon>Bacteria</taxon>
        <taxon>Bacillati</taxon>
        <taxon>Bacillota</taxon>
        <taxon>Bacilli</taxon>
        <taxon>Bacillales</taxon>
        <taxon>Bacillaceae</taxon>
        <taxon>Bacillus</taxon>
        <taxon>Bacillus cereus group</taxon>
    </lineage>
</organism>
<keyword id="KW-0963">Cytoplasm</keyword>
<keyword id="KW-0671">Queuosine biosynthesis</keyword>
<keyword id="KW-0949">S-adenosyl-L-methionine</keyword>
<keyword id="KW-0808">Transferase</keyword>
<gene>
    <name evidence="1" type="primary">queA</name>
    <name type="ordered locus">BAMEG_4682</name>
</gene>
<proteinExistence type="inferred from homology"/>